<comment type="function">
    <text evidence="2 6">Plays a role in the microtubule-dependent coupling of the nucleus and the centrosome. Involved in the processes that regulate centrosome-mediated interkinetic nuclear migration (INM) of neural progenitors (PubMed:17920017). Acts as a component of the TACC3/ch-TOG/clathrin complex proposed to contribute to stabilization of kinetochore fibers of the mitotic spindle by acting as inter-microtubule bridge. The TACC3/ch-TOG/clathrin complex is required for the maintenance of kinetochore fiber tension (By similarity). May be involved in the control of cell growth and differentiation. May have a role in embryonic development.</text>
</comment>
<comment type="subunit">
    <text evidence="2 5 6">Interacts with GCN5L2 and PCAF (By similarity). The coiled coil C-terminal region interacts with AH receptor nuclear translocator protein (ARNT) and ARNT2 (PubMed:11025203). Interacts with CCDC100/CEP120 (PubMed:17920017). Interacts with CKAP5 independently of clathrin. Interacts with CKAP5 and clathrin forming the TACC3/ch-TOG/clathrin complex located at spindle inter-microtubules bridges; TACC3 (phosphorylated at Ser-347 by AURKA) and CLTC are proposed to form a composite microtubule interaction surface (By similarity).</text>
</comment>
<comment type="interaction">
    <interactant intactId="EBI-2553611">
        <id>Q9JJ11</id>
    </interactant>
    <interactant intactId="EBI-4394596">
        <id>O35615</id>
        <label>Zfpm1</label>
    </interactant>
    <organismsDiffer>false</organismsDiffer>
    <experiments>7</experiments>
</comment>
<comment type="subcellular location">
    <subcellularLocation>
        <location evidence="6">Cytoplasm</location>
    </subcellularLocation>
    <subcellularLocation>
        <location evidence="2">Cytoplasm</location>
        <location evidence="2">Cytoskeleton</location>
        <location evidence="2">Microtubule organizing center</location>
        <location evidence="2">Centrosome</location>
    </subcellularLocation>
    <subcellularLocation>
        <location evidence="1">Cytoplasm</location>
        <location evidence="1">Cytoskeleton</location>
        <location evidence="1">Spindle pole</location>
    </subcellularLocation>
    <text evidence="2">In complex with CKAP5 localized to microtubule plus-ends in mitosis and interphase. In complex with CKAP5 and clathrin localized to inter-microtubule bridges in mitotic spindles.</text>
</comment>
<comment type="alternative products">
    <event type="alternative splicing"/>
    <isoform>
        <id>Q9JJ11-1</id>
        <name>1</name>
        <sequence type="displayed"/>
    </isoform>
    <isoform>
        <id>Q9JJ11-2</id>
        <name>2</name>
        <sequence type="described" ref="VSP_006370 VSP_006371"/>
    </isoform>
</comment>
<comment type="tissue specificity">
    <text>Embryonically expressed.</text>
</comment>
<comment type="developmental stage">
    <text>At 9 dpc, the expression is strong in the neuroepithelium of neural tube and in placenta. At 13 dpc, the expression is still observed in neuroepithelium. Furthermore, strong expression is seen in lung, kidney, intestines, thymus and liver, and a moderate signal is detected in the cartilage primordium of developing ribs, tooth and eye. By 17 dpc, the tissue distribution changes so that no signal is detected in the liver and the signal has diminished in other organs. It is observed for the first time in the salivary gland, thyroid gland and brown fat and was strong in the thymus, eye, olfactory epithelium and central nervous system. At 1.5 days after birth, the expression is still strong in thymus, but weaker and more limited in brain.</text>
</comment>
<comment type="similarity">
    <text evidence="8">Belongs to the TACC family.</text>
</comment>
<keyword id="KW-0002">3D-structure</keyword>
<keyword id="KW-0007">Acetylation</keyword>
<keyword id="KW-0025">Alternative splicing</keyword>
<keyword id="KW-0131">Cell cycle</keyword>
<keyword id="KW-0132">Cell division</keyword>
<keyword id="KW-0175">Coiled coil</keyword>
<keyword id="KW-0963">Cytoplasm</keyword>
<keyword id="KW-0206">Cytoskeleton</keyword>
<keyword id="KW-0498">Mitosis</keyword>
<keyword id="KW-0597">Phosphoprotein</keyword>
<keyword id="KW-1185">Reference proteome</keyword>
<organism>
    <name type="scientific">Mus musculus</name>
    <name type="common">Mouse</name>
    <dbReference type="NCBI Taxonomy" id="10090"/>
    <lineage>
        <taxon>Eukaryota</taxon>
        <taxon>Metazoa</taxon>
        <taxon>Chordata</taxon>
        <taxon>Craniata</taxon>
        <taxon>Vertebrata</taxon>
        <taxon>Euteleostomi</taxon>
        <taxon>Mammalia</taxon>
        <taxon>Eutheria</taxon>
        <taxon>Euarchontoglires</taxon>
        <taxon>Glires</taxon>
        <taxon>Rodentia</taxon>
        <taxon>Myomorpha</taxon>
        <taxon>Muroidea</taxon>
        <taxon>Muridae</taxon>
        <taxon>Murinae</taxon>
        <taxon>Mus</taxon>
        <taxon>Mus</taxon>
    </lineage>
</organism>
<sequence>MSLHVLNDENVPNEKSSQCRDFQFLPPELTGRSSVLCLSQKENVPPQSQAKATNVTFQTPPRDPQTHRILSPNMTNKREAPFGLQNDHCVFLQKENQRPLAPVDDAPVVQMAAEILRAEGELQEGILTSSSLSASTSLLDSELVTPPIEPVLEPSHQGLEPVLESELVTPPVEPVLEPSHQELEPVLESELVTPPIEPVLEPSHQGLEPVLDSELVTPPIEPVLEPSHQGLEPVLESELVTPPIEPVLEPSHQGLEPVLDSELVTPPIEPVLEPSHQGLEPVLDSELVTPPIEPLLEPSHQGLEPVVDLKEESFRDPSEVLGTGAEVDYLEQFGTSSFKESAWRKQSLYVKFDPLLKDSPLRPMPVAPITNSTQDTEEESGSGKPTEAELVNLDFLGDLDVPVSAPTPVWSLEPRGLLPAEPIVDVLKYSQKDLDAVVNVMQQENLELKSKYEDLNTKYLEMGKSVDEFEKIAYKSLEEAEKQRELKEIAEDKIQKVLKERDQLNADLNSMEKSFSDLFKRFEKRKEVIEGYQKNEESLKKYVGECIVKIEKEGQRYQALKIHAEEKLRLANEEIAQVHSKAQAEVLALQASLRKAQMQNHSLEMTLEQKTKEIDELTRICDDLISKMEKI</sequence>
<protein>
    <recommendedName>
        <fullName>Transforming acidic coiled-coil-containing protein 3</fullName>
    </recommendedName>
    <alternativeName>
        <fullName>ARNT-interacting protein</fullName>
    </alternativeName>
</protein>
<accession>Q9JJ11</accession>
<accession>Q9WVK9</accession>
<gene>
    <name type="primary">Tacc3</name>
    <name type="synonym">Aint</name>
</gene>
<reference key="1">
    <citation type="journal article" date="2000" name="Mech. Dev.">
        <title>Isolation and characterization of AINT: a novel ARNT interacting protein expressed during murine embryonic development.</title>
        <authorList>
            <person name="Sadek C.M."/>
            <person name="Jalaguier S."/>
            <person name="Feeney E.P."/>
            <person name="Aitola M."/>
            <person name="Damdimopoulos A.E."/>
            <person name="Pelto-Huikko M."/>
            <person name="Gustafsson J.-A."/>
        </authorList>
    </citation>
    <scope>NUCLEOTIDE SEQUENCE [MRNA] (ISOFORM 1)</scope>
    <scope>INTERACTION WITH ARNT AND ARNT2</scope>
    <source>
        <strain>NIH Swiss</strain>
        <tissue>Embryo</tissue>
    </source>
</reference>
<reference key="2">
    <citation type="journal article" date="1999" name="Genomics">
        <title>The third member of the transforming acidic coiled coil-containing gene family, TACC3, maps in 4p16, close to translocation breakpoints in multiple myeloma, and is upregulated in various cancer cell lines.</title>
        <authorList>
            <person name="Still I.H."/>
            <person name="Vince P."/>
            <person name="Cowell J.K."/>
        </authorList>
    </citation>
    <scope>NUCLEOTIDE SEQUENCE [MRNA] (ISOFORM 2)</scope>
</reference>
<reference key="3">
    <citation type="journal article" date="2007" name="Neuron">
        <title>Cep120 and TACCs control interkinetic nuclear migration and the neural progenitor pool.</title>
        <authorList>
            <person name="Xie Z."/>
            <person name="Moy L.Y."/>
            <person name="Sanada K."/>
            <person name="Zhou Y."/>
            <person name="Buchman J.J."/>
            <person name="Tsai L.-H."/>
        </authorList>
    </citation>
    <scope>FUNCTION</scope>
    <scope>INTERACTION WITH CCDC100</scope>
    <scope>SUBCELLULAR LOCATION</scope>
</reference>
<reference key="4">
    <citation type="journal article" date="2010" name="Cell">
        <title>A tissue-specific atlas of mouse protein phosphorylation and expression.</title>
        <authorList>
            <person name="Huttlin E.L."/>
            <person name="Jedrychowski M.P."/>
            <person name="Elias J.E."/>
            <person name="Goswami T."/>
            <person name="Rad R."/>
            <person name="Beausoleil S.A."/>
            <person name="Villen J."/>
            <person name="Haas W."/>
            <person name="Sowa M.E."/>
            <person name="Gygi S.P."/>
        </authorList>
    </citation>
    <scope>IDENTIFICATION BY MASS SPECTROMETRY [LARGE SCALE ANALYSIS]</scope>
    <source>
        <tissue>Spleen</tissue>
        <tissue>Testis</tissue>
    </source>
</reference>
<proteinExistence type="evidence at protein level"/>
<feature type="initiator methionine" description="Removed" evidence="2">
    <location>
        <position position="1"/>
    </location>
</feature>
<feature type="chain" id="PRO_0000179991" description="Transforming acidic coiled-coil-containing protein 3">
    <location>
        <begin position="2"/>
        <end position="631"/>
    </location>
</feature>
<feature type="region of interest" description="Disordered" evidence="4">
    <location>
        <begin position="42"/>
        <end position="70"/>
    </location>
</feature>
<feature type="region of interest" description="Necessary but not sufficient for spindle localization" evidence="2">
    <location>
        <begin position="311"/>
        <end position="366"/>
    </location>
</feature>
<feature type="region of interest" description="Disordered" evidence="4">
    <location>
        <begin position="363"/>
        <end position="385"/>
    </location>
</feature>
<feature type="region of interest" description="Necessary but not sufficient for spindle localization" evidence="2">
    <location>
        <begin position="384"/>
        <end position="631"/>
    </location>
</feature>
<feature type="coiled-coil region" evidence="3">
    <location>
        <begin position="431"/>
        <end position="630"/>
    </location>
</feature>
<feature type="compositionally biased region" description="Polar residues" evidence="4">
    <location>
        <begin position="42"/>
        <end position="59"/>
    </location>
</feature>
<feature type="modified residue" description="N-acetylserine" evidence="2">
    <location>
        <position position="2"/>
    </location>
</feature>
<feature type="modified residue" description="Phosphoserine" evidence="2">
    <location>
        <position position="39"/>
    </location>
</feature>
<feature type="modified residue" description="Phosphoserine" evidence="2">
    <location>
        <position position="71"/>
    </location>
</feature>
<feature type="modified residue" description="Phosphoserine; by AURKA" evidence="2">
    <location>
        <position position="347"/>
    </location>
</feature>
<feature type="splice variant" id="VSP_006370" description="In isoform 2." evidence="7">
    <location>
        <begin position="182"/>
        <end position="277"/>
    </location>
</feature>
<feature type="splice variant" id="VSP_006371" description="In isoform 2." evidence="7">
    <original>S</original>
    <variation>SSHLSNSQ</variation>
    <location>
        <position position="337"/>
    </location>
</feature>
<feature type="sequence conflict" description="In Ref. 2." evidence="8" ref="2">
    <original>P</original>
    <variation>S</variation>
    <location>
        <position position="171"/>
    </location>
</feature>
<feature type="sequence conflict" description="In Ref. 2; AAD25963." evidence="8" ref="2">
    <original>TPVWS</original>
    <variation>PLCV</variation>
    <location>
        <begin position="407"/>
        <end position="411"/>
    </location>
</feature>
<feature type="helix" evidence="9">
    <location>
        <begin position="603"/>
        <end position="623"/>
    </location>
</feature>
<name>TACC3_MOUSE</name>
<dbReference type="EMBL" id="AF156934">
    <property type="protein sequence ID" value="AAF85763.1"/>
    <property type="molecule type" value="mRNA"/>
</dbReference>
<dbReference type="EMBL" id="AF093542">
    <property type="protein sequence ID" value="AAD25963.1"/>
    <property type="molecule type" value="mRNA"/>
</dbReference>
<dbReference type="PDB" id="4LPZ">
    <property type="method" value="X-ray"/>
    <property type="resolution" value="3.15 A"/>
    <property type="chains" value="C/D=610-631"/>
</dbReference>
<dbReference type="PDB" id="4PKY">
    <property type="method" value="X-ray"/>
    <property type="resolution" value="3.20 A"/>
    <property type="chains" value="B/C/E/F=585-631"/>
</dbReference>
<dbReference type="PDBsum" id="4LPZ"/>
<dbReference type="PDBsum" id="4PKY"/>
<dbReference type="SMR" id="Q9JJ11"/>
<dbReference type="FunCoup" id="Q9JJ11">
    <property type="interactions" value="530"/>
</dbReference>
<dbReference type="IntAct" id="Q9JJ11">
    <property type="interactions" value="4"/>
</dbReference>
<dbReference type="STRING" id="10090.ENSMUSP00000074394"/>
<dbReference type="GlyGen" id="Q9JJ11">
    <property type="glycosylation" value="2 sites, 1 O-linked glycan (1 site)"/>
</dbReference>
<dbReference type="iPTMnet" id="Q9JJ11"/>
<dbReference type="PhosphoSitePlus" id="Q9JJ11"/>
<dbReference type="PaxDb" id="10090-ENSMUSP00000110069"/>
<dbReference type="ProteomicsDB" id="263061">
    <molecule id="Q9JJ11-1"/>
</dbReference>
<dbReference type="ProteomicsDB" id="263062">
    <molecule id="Q9JJ11-2"/>
</dbReference>
<dbReference type="Pumba" id="Q9JJ11"/>
<dbReference type="AGR" id="MGI:1341163"/>
<dbReference type="MGI" id="MGI:1341163">
    <property type="gene designation" value="Tacc3"/>
</dbReference>
<dbReference type="eggNOG" id="ENOG502QQ1G">
    <property type="taxonomic scope" value="Eukaryota"/>
</dbReference>
<dbReference type="InParanoid" id="Q9JJ11"/>
<dbReference type="PhylomeDB" id="Q9JJ11"/>
<dbReference type="CD-CODE" id="764D0258">
    <property type="entry name" value="Neuronal RNP granule"/>
</dbReference>
<dbReference type="ChiTaRS" id="Tacc3">
    <property type="organism name" value="mouse"/>
</dbReference>
<dbReference type="EvolutionaryTrace" id="Q9JJ11"/>
<dbReference type="PRO" id="PR:Q9JJ11"/>
<dbReference type="Proteomes" id="UP000000589">
    <property type="component" value="Unplaced"/>
</dbReference>
<dbReference type="RNAct" id="Q9JJ11">
    <property type="molecule type" value="protein"/>
</dbReference>
<dbReference type="GO" id="GO:0005813">
    <property type="term" value="C:centrosome"/>
    <property type="evidence" value="ECO:0000314"/>
    <property type="project" value="MGI"/>
</dbReference>
<dbReference type="GO" id="GO:0005737">
    <property type="term" value="C:cytoplasm"/>
    <property type="evidence" value="ECO:0000314"/>
    <property type="project" value="MGI"/>
</dbReference>
<dbReference type="GO" id="GO:0005829">
    <property type="term" value="C:cytosol"/>
    <property type="evidence" value="ECO:0000304"/>
    <property type="project" value="Reactome"/>
</dbReference>
<dbReference type="GO" id="GO:0098978">
    <property type="term" value="C:glutamatergic synapse"/>
    <property type="evidence" value="ECO:0000314"/>
    <property type="project" value="SynGO"/>
</dbReference>
<dbReference type="GO" id="GO:0014069">
    <property type="term" value="C:postsynaptic density"/>
    <property type="evidence" value="ECO:0000314"/>
    <property type="project" value="SynGO"/>
</dbReference>
<dbReference type="GO" id="GO:0000922">
    <property type="term" value="C:spindle pole"/>
    <property type="evidence" value="ECO:0007669"/>
    <property type="project" value="UniProtKB-SubCell"/>
</dbReference>
<dbReference type="GO" id="GO:0019904">
    <property type="term" value="F:protein domain specific binding"/>
    <property type="evidence" value="ECO:0000353"/>
    <property type="project" value="MGI"/>
</dbReference>
<dbReference type="GO" id="GO:0030953">
    <property type="term" value="P:astral microtubule organization"/>
    <property type="evidence" value="ECO:0000314"/>
    <property type="project" value="MGI"/>
</dbReference>
<dbReference type="GO" id="GO:0051301">
    <property type="term" value="P:cell division"/>
    <property type="evidence" value="ECO:0007669"/>
    <property type="project" value="UniProtKB-KW"/>
</dbReference>
<dbReference type="GO" id="GO:0008283">
    <property type="term" value="P:cell population proliferation"/>
    <property type="evidence" value="ECO:0000315"/>
    <property type="project" value="MGI"/>
</dbReference>
<dbReference type="GO" id="GO:0021987">
    <property type="term" value="P:cerebral cortex development"/>
    <property type="evidence" value="ECO:0000315"/>
    <property type="project" value="MGI"/>
</dbReference>
<dbReference type="GO" id="GO:0030097">
    <property type="term" value="P:hemopoiesis"/>
    <property type="evidence" value="ECO:0000315"/>
    <property type="project" value="MGI"/>
</dbReference>
<dbReference type="GO" id="GO:0022027">
    <property type="term" value="P:interkinetic nuclear migration"/>
    <property type="evidence" value="ECO:0000315"/>
    <property type="project" value="MGI"/>
</dbReference>
<dbReference type="GO" id="GO:0000226">
    <property type="term" value="P:microtubule cytoskeleton organization"/>
    <property type="evidence" value="ECO:0000315"/>
    <property type="project" value="MGI"/>
</dbReference>
<dbReference type="GO" id="GO:0007052">
    <property type="term" value="P:mitotic spindle organization"/>
    <property type="evidence" value="ECO:0007669"/>
    <property type="project" value="InterPro"/>
</dbReference>
<dbReference type="GO" id="GO:0022008">
    <property type="term" value="P:neurogenesis"/>
    <property type="evidence" value="ECO:0000315"/>
    <property type="project" value="MGI"/>
</dbReference>
<dbReference type="GO" id="GO:0051726">
    <property type="term" value="P:regulation of cell cycle"/>
    <property type="evidence" value="ECO:0000316"/>
    <property type="project" value="MGI"/>
</dbReference>
<dbReference type="GO" id="GO:0032886">
    <property type="term" value="P:regulation of microtubule-based process"/>
    <property type="evidence" value="ECO:0000315"/>
    <property type="project" value="MGI"/>
</dbReference>
<dbReference type="GO" id="GO:0001666">
    <property type="term" value="P:response to hypoxia"/>
    <property type="evidence" value="ECO:0000314"/>
    <property type="project" value="MGI"/>
</dbReference>
<dbReference type="FunFam" id="1.20.5.1700:FF:000001">
    <property type="entry name" value="Transforming acidic coiled-coil-containing protein 1 isoform 2"/>
    <property type="match status" value="1"/>
</dbReference>
<dbReference type="Gene3D" id="1.20.5.1700">
    <property type="match status" value="1"/>
</dbReference>
<dbReference type="InterPro" id="IPR039915">
    <property type="entry name" value="TACC"/>
</dbReference>
<dbReference type="InterPro" id="IPR007707">
    <property type="entry name" value="TACC_C"/>
</dbReference>
<dbReference type="PANTHER" id="PTHR13924">
    <property type="entry name" value="TRANSFORMING ACIDIC COILED-COIL CONTAINING PROTEIN 1/2"/>
    <property type="match status" value="1"/>
</dbReference>
<dbReference type="PANTHER" id="PTHR13924:SF4">
    <property type="entry name" value="TRANSFORMING ACIDIC COILED-COIL-CONTAINING PROTEIN 3"/>
    <property type="match status" value="1"/>
</dbReference>
<dbReference type="Pfam" id="PF05010">
    <property type="entry name" value="TACC_C"/>
    <property type="match status" value="1"/>
</dbReference>
<evidence type="ECO:0000250" key="1">
    <source>
        <dbReference type="UniProtKB" id="Q9PTG8"/>
    </source>
</evidence>
<evidence type="ECO:0000250" key="2">
    <source>
        <dbReference type="UniProtKB" id="Q9Y6A5"/>
    </source>
</evidence>
<evidence type="ECO:0000255" key="3"/>
<evidence type="ECO:0000256" key="4">
    <source>
        <dbReference type="SAM" id="MobiDB-lite"/>
    </source>
</evidence>
<evidence type="ECO:0000269" key="5">
    <source>
    </source>
</evidence>
<evidence type="ECO:0000269" key="6">
    <source>
    </source>
</evidence>
<evidence type="ECO:0000303" key="7">
    <source>
    </source>
</evidence>
<evidence type="ECO:0000305" key="8"/>
<evidence type="ECO:0007829" key="9">
    <source>
        <dbReference type="PDB" id="4LPZ"/>
    </source>
</evidence>